<comment type="function">
    <text evidence="2">One of the essential components for the initiation of protein synthesis. Protects formylmethionyl-tRNA from spontaneous hydrolysis and promotes its binding to the 30S ribosomal subunits. Also involved in the hydrolysis of GTP during the formation of the 70S ribosomal complex.</text>
</comment>
<comment type="subcellular location">
    <subcellularLocation>
        <location evidence="2">Cytoplasm</location>
    </subcellularLocation>
</comment>
<comment type="similarity">
    <text evidence="2">Belongs to the TRAFAC class translation factor GTPase superfamily. Classic translation factor GTPase family. IF-2 subfamily.</text>
</comment>
<feature type="chain" id="PRO_1000057661" description="Translation initiation factor IF-2">
    <location>
        <begin position="1"/>
        <end position="831"/>
    </location>
</feature>
<feature type="domain" description="tr-type G">
    <location>
        <begin position="329"/>
        <end position="499"/>
    </location>
</feature>
<feature type="region of interest" description="G1" evidence="1">
    <location>
        <begin position="338"/>
        <end position="345"/>
    </location>
</feature>
<feature type="region of interest" description="G2" evidence="1">
    <location>
        <begin position="363"/>
        <end position="367"/>
    </location>
</feature>
<feature type="region of interest" description="G3" evidence="1">
    <location>
        <begin position="385"/>
        <end position="388"/>
    </location>
</feature>
<feature type="region of interest" description="G4" evidence="1">
    <location>
        <begin position="439"/>
        <end position="442"/>
    </location>
</feature>
<feature type="region of interest" description="G5" evidence="1">
    <location>
        <begin position="475"/>
        <end position="477"/>
    </location>
</feature>
<feature type="binding site" evidence="2">
    <location>
        <begin position="338"/>
        <end position="345"/>
    </location>
    <ligand>
        <name>GTP</name>
        <dbReference type="ChEBI" id="CHEBI:37565"/>
    </ligand>
</feature>
<feature type="binding site" evidence="2">
    <location>
        <begin position="385"/>
        <end position="389"/>
    </location>
    <ligand>
        <name>GTP</name>
        <dbReference type="ChEBI" id="CHEBI:37565"/>
    </ligand>
</feature>
<feature type="binding site" evidence="2">
    <location>
        <begin position="439"/>
        <end position="442"/>
    </location>
    <ligand>
        <name>GTP</name>
        <dbReference type="ChEBI" id="CHEBI:37565"/>
    </ligand>
</feature>
<name>IF2_RICM5</name>
<protein>
    <recommendedName>
        <fullName evidence="2">Translation initiation factor IF-2</fullName>
    </recommendedName>
</protein>
<sequence length="831" mass="91240">MTDNQEIKPKKLTLGNSKLSLNKSFDSLTGAQSFVNANSKTLVEVRKSSTGSATTLSLNKERNSLDQTVIDANKEEFNRRLSILKKAAEQSKLNDPSKISTLSKLASINQSANSRIEPLETDKEVEPKQQNTEENKVEVSAKIVQDDEDIPSQIPKKKEDIFVKSPLVGMRTRYGIESEKELDKTADRKIVAPKIKLEEPKKFKKADLFNMLSDDESGSGRTRSLASIKRAREKEKRKLVSQAPEKVYREVTIPEVIGVGDLANAMSERVADVIKELMKLGILANASQTIDADTAELVATNLGHTVKRVQESDVENVLISDDKVEDLRTRAPVVTVMGHVDHGKTSLLDALKSTDIAAGELGGITQHIGAYRVTLADGRAITFIDTPGHEAFSEMRSRGAKVTDIVIIVVAADDGIKTQTVEAINHAKAAGVPIIVAINKIDKPDIDIERVKNELYVHEIIGEEAGGDVMVIPISALKKINLDKLEEAILLIAEMQDLKANPFGAAAGVVIESKIEQGRGTLTTILVQRGTLRNSDIIIAGTSYGKVKKMINDKGLEILEATPSVPVEIQGLNEVPFAGDKFNVVQNEKQAKDIAEYRMRLAKEKKISIAPRSSLEDLFLKASGNSKIKELPLIIKGDVQGSVEAISGSLLKLPSDEIKLRILHSGVGPITESDLSLAHASSAIIVGFNVRAGANALTAAEKEKVDIRYYSIIYHLIDDIKAIMSGMLDPIVREQYIGSAEIRQIFNIIKVGKIAGSYVTKGIIKKRAGVRLLRDNVVIHEGKFKTLKRFKDEVKEVREGYECGIAFENYEDIREGDTVEVFELIQEQRQL</sequence>
<organism>
    <name type="scientific">Rickettsia massiliae (strain Mtu5)</name>
    <dbReference type="NCBI Taxonomy" id="416276"/>
    <lineage>
        <taxon>Bacteria</taxon>
        <taxon>Pseudomonadati</taxon>
        <taxon>Pseudomonadota</taxon>
        <taxon>Alphaproteobacteria</taxon>
        <taxon>Rickettsiales</taxon>
        <taxon>Rickettsiaceae</taxon>
        <taxon>Rickettsieae</taxon>
        <taxon>Rickettsia</taxon>
        <taxon>spotted fever group</taxon>
    </lineage>
</organism>
<accession>A8F223</accession>
<dbReference type="EMBL" id="CP000683">
    <property type="protein sequence ID" value="ABV84959.1"/>
    <property type="molecule type" value="Genomic_DNA"/>
</dbReference>
<dbReference type="RefSeq" id="WP_012152932.1">
    <property type="nucleotide sequence ID" value="NC_009900.1"/>
</dbReference>
<dbReference type="SMR" id="A8F223"/>
<dbReference type="KEGG" id="rms:RMA_0853"/>
<dbReference type="HOGENOM" id="CLU_006301_10_2_5"/>
<dbReference type="Proteomes" id="UP000001311">
    <property type="component" value="Chromosome"/>
</dbReference>
<dbReference type="GO" id="GO:0005737">
    <property type="term" value="C:cytoplasm"/>
    <property type="evidence" value="ECO:0007669"/>
    <property type="project" value="UniProtKB-SubCell"/>
</dbReference>
<dbReference type="GO" id="GO:0005525">
    <property type="term" value="F:GTP binding"/>
    <property type="evidence" value="ECO:0007669"/>
    <property type="project" value="UniProtKB-KW"/>
</dbReference>
<dbReference type="GO" id="GO:0003924">
    <property type="term" value="F:GTPase activity"/>
    <property type="evidence" value="ECO:0007669"/>
    <property type="project" value="UniProtKB-UniRule"/>
</dbReference>
<dbReference type="GO" id="GO:0097216">
    <property type="term" value="F:guanosine tetraphosphate binding"/>
    <property type="evidence" value="ECO:0007669"/>
    <property type="project" value="UniProtKB-ARBA"/>
</dbReference>
<dbReference type="GO" id="GO:0003743">
    <property type="term" value="F:translation initiation factor activity"/>
    <property type="evidence" value="ECO:0007669"/>
    <property type="project" value="UniProtKB-UniRule"/>
</dbReference>
<dbReference type="CDD" id="cd01887">
    <property type="entry name" value="IF2_eIF5B"/>
    <property type="match status" value="1"/>
</dbReference>
<dbReference type="CDD" id="cd03702">
    <property type="entry name" value="IF2_mtIF2_II"/>
    <property type="match status" value="1"/>
</dbReference>
<dbReference type="CDD" id="cd03692">
    <property type="entry name" value="mtIF2_IVc"/>
    <property type="match status" value="1"/>
</dbReference>
<dbReference type="FunFam" id="2.40.30.10:FF:000008">
    <property type="entry name" value="Translation initiation factor IF-2"/>
    <property type="match status" value="1"/>
</dbReference>
<dbReference type="FunFam" id="2.40.30.10:FF:000054">
    <property type="entry name" value="Translation initiation factor IF-2"/>
    <property type="match status" value="1"/>
</dbReference>
<dbReference type="FunFam" id="3.40.50.10050:FF:000001">
    <property type="entry name" value="Translation initiation factor IF-2"/>
    <property type="match status" value="1"/>
</dbReference>
<dbReference type="FunFam" id="3.40.50.300:FF:000019">
    <property type="entry name" value="Translation initiation factor IF-2"/>
    <property type="match status" value="1"/>
</dbReference>
<dbReference type="Gene3D" id="3.40.50.300">
    <property type="entry name" value="P-loop containing nucleotide triphosphate hydrolases"/>
    <property type="match status" value="1"/>
</dbReference>
<dbReference type="Gene3D" id="2.40.30.10">
    <property type="entry name" value="Translation factors"/>
    <property type="match status" value="2"/>
</dbReference>
<dbReference type="Gene3D" id="3.40.50.10050">
    <property type="entry name" value="Translation initiation factor IF- 2, domain 3"/>
    <property type="match status" value="1"/>
</dbReference>
<dbReference type="HAMAP" id="MF_00100_B">
    <property type="entry name" value="IF_2_B"/>
    <property type="match status" value="1"/>
</dbReference>
<dbReference type="InterPro" id="IPR053905">
    <property type="entry name" value="EF-G-like_DII"/>
</dbReference>
<dbReference type="InterPro" id="IPR004161">
    <property type="entry name" value="EFTu-like_2"/>
</dbReference>
<dbReference type="InterPro" id="IPR044145">
    <property type="entry name" value="IF2_II"/>
</dbReference>
<dbReference type="InterPro" id="IPR006847">
    <property type="entry name" value="IF2_N"/>
</dbReference>
<dbReference type="InterPro" id="IPR027417">
    <property type="entry name" value="P-loop_NTPase"/>
</dbReference>
<dbReference type="InterPro" id="IPR005225">
    <property type="entry name" value="Small_GTP-bd"/>
</dbReference>
<dbReference type="InterPro" id="IPR000795">
    <property type="entry name" value="T_Tr_GTP-bd_dom"/>
</dbReference>
<dbReference type="InterPro" id="IPR000178">
    <property type="entry name" value="TF_IF2_bacterial-like"/>
</dbReference>
<dbReference type="InterPro" id="IPR015760">
    <property type="entry name" value="TIF_IF2"/>
</dbReference>
<dbReference type="InterPro" id="IPR023115">
    <property type="entry name" value="TIF_IF2_dom3"/>
</dbReference>
<dbReference type="InterPro" id="IPR036925">
    <property type="entry name" value="TIF_IF2_dom3_sf"/>
</dbReference>
<dbReference type="InterPro" id="IPR009000">
    <property type="entry name" value="Transl_B-barrel_sf"/>
</dbReference>
<dbReference type="NCBIfam" id="TIGR00487">
    <property type="entry name" value="IF-2"/>
    <property type="match status" value="1"/>
</dbReference>
<dbReference type="NCBIfam" id="TIGR00231">
    <property type="entry name" value="small_GTP"/>
    <property type="match status" value="1"/>
</dbReference>
<dbReference type="PANTHER" id="PTHR43381:SF5">
    <property type="entry name" value="TR-TYPE G DOMAIN-CONTAINING PROTEIN"/>
    <property type="match status" value="1"/>
</dbReference>
<dbReference type="PANTHER" id="PTHR43381">
    <property type="entry name" value="TRANSLATION INITIATION FACTOR IF-2-RELATED"/>
    <property type="match status" value="1"/>
</dbReference>
<dbReference type="Pfam" id="PF22042">
    <property type="entry name" value="EF-G_D2"/>
    <property type="match status" value="1"/>
</dbReference>
<dbReference type="Pfam" id="PF00009">
    <property type="entry name" value="GTP_EFTU"/>
    <property type="match status" value="1"/>
</dbReference>
<dbReference type="Pfam" id="PF03144">
    <property type="entry name" value="GTP_EFTU_D2"/>
    <property type="match status" value="1"/>
</dbReference>
<dbReference type="Pfam" id="PF11987">
    <property type="entry name" value="IF-2"/>
    <property type="match status" value="1"/>
</dbReference>
<dbReference type="Pfam" id="PF04760">
    <property type="entry name" value="IF2_N"/>
    <property type="match status" value="1"/>
</dbReference>
<dbReference type="SUPFAM" id="SSF52156">
    <property type="entry name" value="Initiation factor IF2/eIF5b, domain 3"/>
    <property type="match status" value="1"/>
</dbReference>
<dbReference type="SUPFAM" id="SSF52540">
    <property type="entry name" value="P-loop containing nucleoside triphosphate hydrolases"/>
    <property type="match status" value="1"/>
</dbReference>
<dbReference type="SUPFAM" id="SSF50447">
    <property type="entry name" value="Translation proteins"/>
    <property type="match status" value="2"/>
</dbReference>
<dbReference type="PROSITE" id="PS51722">
    <property type="entry name" value="G_TR_2"/>
    <property type="match status" value="1"/>
</dbReference>
<proteinExistence type="inferred from homology"/>
<evidence type="ECO:0000250" key="1"/>
<evidence type="ECO:0000255" key="2">
    <source>
        <dbReference type="HAMAP-Rule" id="MF_00100"/>
    </source>
</evidence>
<gene>
    <name evidence="2" type="primary">infB</name>
    <name type="ordered locus">RMA_0853</name>
</gene>
<keyword id="KW-0963">Cytoplasm</keyword>
<keyword id="KW-0342">GTP-binding</keyword>
<keyword id="KW-0396">Initiation factor</keyword>
<keyword id="KW-0547">Nucleotide-binding</keyword>
<keyword id="KW-0648">Protein biosynthesis</keyword>
<reference key="1">
    <citation type="journal article" date="2007" name="Genome Res.">
        <title>Lateral gene transfer between obligate intracellular bacteria: evidence from the Rickettsia massiliae genome.</title>
        <authorList>
            <person name="Blanc G."/>
            <person name="Ogata H."/>
            <person name="Robert C."/>
            <person name="Audic S."/>
            <person name="Claverie J.-M."/>
            <person name="Raoult D."/>
        </authorList>
    </citation>
    <scope>NUCLEOTIDE SEQUENCE [LARGE SCALE GENOMIC DNA]</scope>
    <source>
        <strain>Mtu5</strain>
    </source>
</reference>